<name>SSUB3_RHOJR</name>
<protein>
    <recommendedName>
        <fullName evidence="1">Aliphatic sulfonates import ATP-binding protein SsuB 3</fullName>
        <ecNumber evidence="1">7.6.2.14</ecNumber>
    </recommendedName>
</protein>
<dbReference type="EC" id="7.6.2.14" evidence="1"/>
<dbReference type="EMBL" id="CP000431">
    <property type="protein sequence ID" value="ABG98814.1"/>
    <property type="molecule type" value="Genomic_DNA"/>
</dbReference>
<dbReference type="RefSeq" id="WP_011598781.1">
    <property type="nucleotide sequence ID" value="NC_008268.1"/>
</dbReference>
<dbReference type="SMR" id="Q0S0X2"/>
<dbReference type="KEGG" id="rha:RHA1_ro07048"/>
<dbReference type="PATRIC" id="fig|101510.16.peg.7109"/>
<dbReference type="eggNOG" id="COG1116">
    <property type="taxonomic scope" value="Bacteria"/>
</dbReference>
<dbReference type="HOGENOM" id="CLU_000604_1_22_11"/>
<dbReference type="OrthoDB" id="8773773at2"/>
<dbReference type="Proteomes" id="UP000008710">
    <property type="component" value="Chromosome"/>
</dbReference>
<dbReference type="GO" id="GO:0005886">
    <property type="term" value="C:plasma membrane"/>
    <property type="evidence" value="ECO:0007669"/>
    <property type="project" value="UniProtKB-SubCell"/>
</dbReference>
<dbReference type="GO" id="GO:0005524">
    <property type="term" value="F:ATP binding"/>
    <property type="evidence" value="ECO:0007669"/>
    <property type="project" value="UniProtKB-KW"/>
</dbReference>
<dbReference type="GO" id="GO:0016887">
    <property type="term" value="F:ATP hydrolysis activity"/>
    <property type="evidence" value="ECO:0007669"/>
    <property type="project" value="InterPro"/>
</dbReference>
<dbReference type="Gene3D" id="3.40.50.300">
    <property type="entry name" value="P-loop containing nucleotide triphosphate hydrolases"/>
    <property type="match status" value="1"/>
</dbReference>
<dbReference type="InterPro" id="IPR003593">
    <property type="entry name" value="AAA+_ATPase"/>
</dbReference>
<dbReference type="InterPro" id="IPR003439">
    <property type="entry name" value="ABC_transporter-like_ATP-bd"/>
</dbReference>
<dbReference type="InterPro" id="IPR017871">
    <property type="entry name" value="ABC_transporter-like_CS"/>
</dbReference>
<dbReference type="InterPro" id="IPR050166">
    <property type="entry name" value="ABC_transporter_ATP-bind"/>
</dbReference>
<dbReference type="InterPro" id="IPR027417">
    <property type="entry name" value="P-loop_NTPase"/>
</dbReference>
<dbReference type="PANTHER" id="PTHR42788:SF17">
    <property type="entry name" value="ALIPHATIC SULFONATES IMPORT ATP-BINDING PROTEIN SSUB"/>
    <property type="match status" value="1"/>
</dbReference>
<dbReference type="PANTHER" id="PTHR42788">
    <property type="entry name" value="TAURINE IMPORT ATP-BINDING PROTEIN-RELATED"/>
    <property type="match status" value="1"/>
</dbReference>
<dbReference type="Pfam" id="PF00005">
    <property type="entry name" value="ABC_tran"/>
    <property type="match status" value="1"/>
</dbReference>
<dbReference type="SMART" id="SM00382">
    <property type="entry name" value="AAA"/>
    <property type="match status" value="1"/>
</dbReference>
<dbReference type="SUPFAM" id="SSF52540">
    <property type="entry name" value="P-loop containing nucleoside triphosphate hydrolases"/>
    <property type="match status" value="1"/>
</dbReference>
<dbReference type="PROSITE" id="PS00211">
    <property type="entry name" value="ABC_TRANSPORTER_1"/>
    <property type="match status" value="1"/>
</dbReference>
<dbReference type="PROSITE" id="PS50893">
    <property type="entry name" value="ABC_TRANSPORTER_2"/>
    <property type="match status" value="1"/>
</dbReference>
<dbReference type="PROSITE" id="PS51291">
    <property type="entry name" value="SSUB"/>
    <property type="match status" value="1"/>
</dbReference>
<keyword id="KW-0067">ATP-binding</keyword>
<keyword id="KW-1003">Cell membrane</keyword>
<keyword id="KW-0472">Membrane</keyword>
<keyword id="KW-0547">Nucleotide-binding</keyword>
<keyword id="KW-1278">Translocase</keyword>
<keyword id="KW-0813">Transport</keyword>
<organism>
    <name type="scientific">Rhodococcus jostii (strain RHA1)</name>
    <dbReference type="NCBI Taxonomy" id="101510"/>
    <lineage>
        <taxon>Bacteria</taxon>
        <taxon>Bacillati</taxon>
        <taxon>Actinomycetota</taxon>
        <taxon>Actinomycetes</taxon>
        <taxon>Mycobacteriales</taxon>
        <taxon>Nocardiaceae</taxon>
        <taxon>Rhodococcus</taxon>
    </lineage>
</organism>
<gene>
    <name evidence="1" type="primary">ssuB3</name>
    <name type="ordered locus">RHA1_ro07048</name>
</gene>
<comment type="function">
    <text evidence="1">Part of the ABC transporter complex SsuABC involved in aliphatic sulfonates import. Responsible for energy coupling to the transport system.</text>
</comment>
<comment type="catalytic activity">
    <reaction evidence="1">
        <text>ATP + H2O + aliphatic sulfonate-[sulfonate-binding protein]Side 1 = ADP + phosphate + aliphatic sulfonateSide 2 + [sulfonate-binding protein]Side 1.</text>
        <dbReference type="EC" id="7.6.2.14"/>
    </reaction>
</comment>
<comment type="subunit">
    <text evidence="1">The complex is composed of two ATP-binding proteins (SsuB), two transmembrane proteins (SsuC) and a solute-binding protein (SsuA).</text>
</comment>
<comment type="subcellular location">
    <subcellularLocation>
        <location evidence="1">Cell membrane</location>
        <topology evidence="1">Peripheral membrane protein</topology>
    </subcellularLocation>
</comment>
<comment type="similarity">
    <text evidence="1">Belongs to the ABC transporter superfamily. Aliphatic sulfonates importer (TC 3.A.1.17.2) family.</text>
</comment>
<sequence length="268" mass="29043">MTAAEAPLPPLAPRERTATTAAERRTGSPLAVSLSGVRKSFGDKTVLSGIDLEITRGEFVVLLGPSGTGKTTLLRLLSGLEPPDGGDVLVPRQRTVVYQEPRLIPSKRVLANVSVGQKRAQLTRDNARRALAEVNLADKERAWPATLSGGEAQRVALARALVREPELLLLDEPFAALDALTRLQMQDLVGDLVARHRPAVLLVTHDVDEAVRLADRVLILDNGGFAVDVDIDLPRPRDRNDPEALRYRATFLAQLGVGRPSSTRQDIS</sequence>
<accession>Q0S0X2</accession>
<evidence type="ECO:0000255" key="1">
    <source>
        <dbReference type="HAMAP-Rule" id="MF_01724"/>
    </source>
</evidence>
<evidence type="ECO:0000256" key="2">
    <source>
        <dbReference type="SAM" id="MobiDB-lite"/>
    </source>
</evidence>
<proteinExistence type="inferred from homology"/>
<reference key="1">
    <citation type="journal article" date="2006" name="Proc. Natl. Acad. Sci. U.S.A.">
        <title>The complete genome of Rhodococcus sp. RHA1 provides insights into a catabolic powerhouse.</title>
        <authorList>
            <person name="McLeod M.P."/>
            <person name="Warren R.L."/>
            <person name="Hsiao W.W.L."/>
            <person name="Araki N."/>
            <person name="Myhre M."/>
            <person name="Fernandes C."/>
            <person name="Miyazawa D."/>
            <person name="Wong W."/>
            <person name="Lillquist A.L."/>
            <person name="Wang D."/>
            <person name="Dosanjh M."/>
            <person name="Hara H."/>
            <person name="Petrescu A."/>
            <person name="Morin R.D."/>
            <person name="Yang G."/>
            <person name="Stott J.M."/>
            <person name="Schein J.E."/>
            <person name="Shin H."/>
            <person name="Smailus D."/>
            <person name="Siddiqui A.S."/>
            <person name="Marra M.A."/>
            <person name="Jones S.J.M."/>
            <person name="Holt R."/>
            <person name="Brinkman F.S.L."/>
            <person name="Miyauchi K."/>
            <person name="Fukuda M."/>
            <person name="Davies J.E."/>
            <person name="Mohn W.W."/>
            <person name="Eltis L.D."/>
        </authorList>
    </citation>
    <scope>NUCLEOTIDE SEQUENCE [LARGE SCALE GENOMIC DNA]</scope>
    <source>
        <strain>RHA1</strain>
    </source>
</reference>
<feature type="chain" id="PRO_0000279956" description="Aliphatic sulfonates import ATP-binding protein SsuB 3">
    <location>
        <begin position="1"/>
        <end position="268"/>
    </location>
</feature>
<feature type="domain" description="ABC transporter" evidence="1">
    <location>
        <begin position="32"/>
        <end position="247"/>
    </location>
</feature>
<feature type="region of interest" description="Disordered" evidence="2">
    <location>
        <begin position="1"/>
        <end position="27"/>
    </location>
</feature>
<feature type="compositionally biased region" description="Basic and acidic residues" evidence="2">
    <location>
        <begin position="13"/>
        <end position="26"/>
    </location>
</feature>
<feature type="binding site" evidence="1">
    <location>
        <begin position="64"/>
        <end position="71"/>
    </location>
    <ligand>
        <name>ATP</name>
        <dbReference type="ChEBI" id="CHEBI:30616"/>
    </ligand>
</feature>